<keyword id="KW-0012">Acyltransferase</keyword>
<keyword id="KW-0028">Amino-acid biosynthesis</keyword>
<keyword id="KW-0220">Diaminopimelate biosynthesis</keyword>
<keyword id="KW-0457">Lysine biosynthesis</keyword>
<keyword id="KW-0677">Repeat</keyword>
<keyword id="KW-0808">Transferase</keyword>
<evidence type="ECO:0000255" key="1">
    <source>
        <dbReference type="HAMAP-Rule" id="MF_01691"/>
    </source>
</evidence>
<proteinExistence type="inferred from homology"/>
<gene>
    <name evidence="1" type="primary">dapH</name>
    <name type="ordered locus">TRQ2_1413</name>
</gene>
<feature type="chain" id="PRO_0000376732" description="2,3,4,5-tetrahydropyridine-2,6-dicarboxylate N-acetyltransferase">
    <location>
        <begin position="1"/>
        <end position="233"/>
    </location>
</feature>
<protein>
    <recommendedName>
        <fullName evidence="1">2,3,4,5-tetrahydropyridine-2,6-dicarboxylate N-acetyltransferase</fullName>
        <ecNumber evidence="1">2.3.1.89</ecNumber>
    </recommendedName>
    <alternativeName>
        <fullName evidence="1">Tetrahydrodipicolinate N-acetyltransferase</fullName>
        <shortName evidence="1">THP acetyltransferase</shortName>
        <shortName evidence="1">Tetrahydropicolinate acetylase</shortName>
    </alternativeName>
</protein>
<sequence length="233" mass="24953">MDAREIIEMIAKAKKKTPIVAYIKGDLAGIDFSSFKFFGDERFGILFGEYEDFKKLLEEHREKIEDYHLEVKARNSALPLADLTKYKARIEPGAIIRDMVEIGEGAVIMMGAVINVGAVIGEGTMIDMNAVVGGRAIIGKKCHIGAGAVIAGVIEPPSAKPVVIEDEVLVGANAVILEGVTVGKGAVVAAGAVVTKDVPPYTVVAGVPARVIKQIDEKTKEKTKIVDELRNLE</sequence>
<dbReference type="EC" id="2.3.1.89" evidence="1"/>
<dbReference type="EMBL" id="CP000969">
    <property type="protein sequence ID" value="ACB09757.1"/>
    <property type="molecule type" value="Genomic_DNA"/>
</dbReference>
<dbReference type="SMR" id="B1LBQ9"/>
<dbReference type="KEGG" id="trq:TRQ2_1413"/>
<dbReference type="HOGENOM" id="CLU_103751_0_0_0"/>
<dbReference type="UniPathway" id="UPA00034">
    <property type="reaction ID" value="UER00022"/>
</dbReference>
<dbReference type="Proteomes" id="UP000001687">
    <property type="component" value="Chromosome"/>
</dbReference>
<dbReference type="GO" id="GO:0047200">
    <property type="term" value="F:tetrahydrodipicolinate N-acetyltransferase activity"/>
    <property type="evidence" value="ECO:0007669"/>
    <property type="project" value="UniProtKB-EC"/>
</dbReference>
<dbReference type="GO" id="GO:0019877">
    <property type="term" value="P:diaminopimelate biosynthetic process"/>
    <property type="evidence" value="ECO:0007669"/>
    <property type="project" value="UniProtKB-UniRule"/>
</dbReference>
<dbReference type="GO" id="GO:0009089">
    <property type="term" value="P:lysine biosynthetic process via diaminopimelate"/>
    <property type="evidence" value="ECO:0007669"/>
    <property type="project" value="UniProtKB-UniRule"/>
</dbReference>
<dbReference type="CDD" id="cd03350">
    <property type="entry name" value="LbH_THP_succinylT"/>
    <property type="match status" value="1"/>
</dbReference>
<dbReference type="Gene3D" id="2.160.10.10">
    <property type="entry name" value="Hexapeptide repeat proteins"/>
    <property type="match status" value="1"/>
</dbReference>
<dbReference type="Gene3D" id="3.30.70.250">
    <property type="entry name" value="Malonyl-CoA ACP transacylase, ACP-binding"/>
    <property type="match status" value="1"/>
</dbReference>
<dbReference type="HAMAP" id="MF_01691">
    <property type="entry name" value="DapH"/>
    <property type="match status" value="1"/>
</dbReference>
<dbReference type="InterPro" id="IPR019873">
    <property type="entry name" value="DapH"/>
</dbReference>
<dbReference type="InterPro" id="IPR013710">
    <property type="entry name" value="DapH_N"/>
</dbReference>
<dbReference type="InterPro" id="IPR001451">
    <property type="entry name" value="Hexapep"/>
</dbReference>
<dbReference type="InterPro" id="IPR018357">
    <property type="entry name" value="Hexapep_transf_CS"/>
</dbReference>
<dbReference type="InterPro" id="IPR050179">
    <property type="entry name" value="Trans_hexapeptide_repeat"/>
</dbReference>
<dbReference type="InterPro" id="IPR011004">
    <property type="entry name" value="Trimer_LpxA-like_sf"/>
</dbReference>
<dbReference type="NCBIfam" id="TIGR03532">
    <property type="entry name" value="DapD_Ac"/>
    <property type="match status" value="1"/>
</dbReference>
<dbReference type="PANTHER" id="PTHR43300:SF10">
    <property type="entry name" value="2,3,4,5-TETRAHYDROPYRIDINE-2,6-DICARBOXYLATE N-ACETYLTRANSFERASE"/>
    <property type="match status" value="1"/>
</dbReference>
<dbReference type="PANTHER" id="PTHR43300">
    <property type="entry name" value="ACETYLTRANSFERASE"/>
    <property type="match status" value="1"/>
</dbReference>
<dbReference type="Pfam" id="PF08503">
    <property type="entry name" value="DapH_N"/>
    <property type="match status" value="1"/>
</dbReference>
<dbReference type="Pfam" id="PF00132">
    <property type="entry name" value="Hexapep"/>
    <property type="match status" value="1"/>
</dbReference>
<dbReference type="Pfam" id="PF14602">
    <property type="entry name" value="Hexapep_2"/>
    <property type="match status" value="1"/>
</dbReference>
<dbReference type="SUPFAM" id="SSF51161">
    <property type="entry name" value="Trimeric LpxA-like enzymes"/>
    <property type="match status" value="1"/>
</dbReference>
<dbReference type="PROSITE" id="PS00101">
    <property type="entry name" value="HEXAPEP_TRANSFERASES"/>
    <property type="match status" value="1"/>
</dbReference>
<organism>
    <name type="scientific">Thermotoga sp. (strain RQ2)</name>
    <dbReference type="NCBI Taxonomy" id="126740"/>
    <lineage>
        <taxon>Bacteria</taxon>
        <taxon>Thermotogati</taxon>
        <taxon>Thermotogota</taxon>
        <taxon>Thermotogae</taxon>
        <taxon>Thermotogales</taxon>
        <taxon>Thermotogaceae</taxon>
        <taxon>Thermotoga</taxon>
    </lineage>
</organism>
<name>DAPH_THESQ</name>
<accession>B1LBQ9</accession>
<comment type="function">
    <text evidence="1">Catalyzes the transfer of an acetyl group from acetyl-CoA to tetrahydrodipicolinate.</text>
</comment>
<comment type="catalytic activity">
    <reaction evidence="1">
        <text>(S)-2,3,4,5-tetrahydrodipicolinate + acetyl-CoA + H2O = L-2-acetamido-6-oxoheptanedioate + CoA</text>
        <dbReference type="Rhea" id="RHEA:13085"/>
        <dbReference type="ChEBI" id="CHEBI:15377"/>
        <dbReference type="ChEBI" id="CHEBI:16845"/>
        <dbReference type="ChEBI" id="CHEBI:57287"/>
        <dbReference type="ChEBI" id="CHEBI:57288"/>
        <dbReference type="ChEBI" id="CHEBI:58117"/>
        <dbReference type="EC" id="2.3.1.89"/>
    </reaction>
</comment>
<comment type="pathway">
    <text evidence="1">Amino-acid biosynthesis; L-lysine biosynthesis via DAP pathway; LL-2,6-diaminopimelate from (S)-tetrahydrodipicolinate (acetylase route): step 1/3.</text>
</comment>
<comment type="similarity">
    <text evidence="1">Belongs to the transferase hexapeptide repeat family. DapH subfamily.</text>
</comment>
<reference key="1">
    <citation type="journal article" date="2011" name="J. Bacteriol.">
        <title>Genome sequence of Thermotoga sp. strain RQ2, a hyperthermophilic bacterium isolated from a geothermally heated region of the seafloor near Ribeira Quente, the Azores.</title>
        <authorList>
            <person name="Swithers K.S."/>
            <person name="DiPippo J.L."/>
            <person name="Bruce D.C."/>
            <person name="Detter C."/>
            <person name="Tapia R."/>
            <person name="Han S."/>
            <person name="Saunders E."/>
            <person name="Goodwin L.A."/>
            <person name="Han J."/>
            <person name="Woyke T."/>
            <person name="Pitluck S."/>
            <person name="Pennacchio L."/>
            <person name="Nolan M."/>
            <person name="Mikhailova N."/>
            <person name="Lykidis A."/>
            <person name="Land M.L."/>
            <person name="Brettin T."/>
            <person name="Stetter K.O."/>
            <person name="Nelson K.E."/>
            <person name="Gogarten J.P."/>
            <person name="Noll K.M."/>
        </authorList>
    </citation>
    <scope>NUCLEOTIDE SEQUENCE [LARGE SCALE GENOMIC DNA]</scope>
    <source>
        <strain>RQ2</strain>
    </source>
</reference>